<accession>Q2HRA7</accession>
<name>MCP_HHV8P</name>
<proteinExistence type="evidence at protein level"/>
<feature type="chain" id="PRO_0000423760" description="Major capsid protein">
    <location>
        <begin position="1"/>
        <end position="1376"/>
    </location>
</feature>
<evidence type="ECO:0000255" key="1">
    <source>
        <dbReference type="HAMAP-Rule" id="MF_04016"/>
    </source>
</evidence>
<evidence type="ECO:0000269" key="2">
    <source>
    </source>
</evidence>
<sequence>MEATLEQRPFPYLATEANLLTQIKESAADGLFKSFQLLLGKDAREGSVRFEALLGVYTNVVEFVKFLETALAAACVNTEFKDLRRMIDGKIQFKISMPTIAHGDGRRPNKQRQYIVMKACNKHHIGAEIELAAADIELLFAEKETPLDFTEYAGAIKTITSALQFGMDALERGLVDTVLAVKLRHAPPVFILKTLGDPVYSERGLKKAVKSDMVSMFKAHLIEHSFFLDKAELMTRGKQYVLTMLSDMLAAVCEDTVFKGVSTYTTASGQQVAGVLETTDSVMRRLMNLLGQVESAMSGPAAYASYVVRGANLVTAVSYGRAMRNFEQFMARIVDHPNALPSVEGDKAALADGHDEIQRTRIAASLVKIGDKFVAIESLQRMYNETQFPCPLNRRIQYTYFFPVGLHLPVPRYSTSVSVRGVESPAIQSTETWVVNKNNVPLCFGYQNALKSICHPRMHNPTQSAQALNQAFPDPDGGHGYGLRYEQTPNMNLFRTFHQYYMGKNVAFVPDVAQKALVTTEDLLHPTSHRLLRLEVHPFFDFFVHPCPGARGSYRATHRTMVGNIPQPLAPREFQESRGAQFDAVTNMTHVIDQLTIDVIQETAFDPAYPLFCYVIEAMIHGQEEKFVMNMPLIALVIQTYWVNSGKLAFVNSYHMVRFICTHMGNGSIPKEAHGHYRKILGELIALEQALLKLAGHETVGRTPITHLVSALLDPHLLPPFAYHDVFTDLMQKSSRQPIIKIGDQNYDNPQNRATFINLRGRMEDLVNNLVNIYQTRVNEDHDERHVLDVAPLDENDYNPVLEKLFYYVLMPVCSNGHMCGMGVDYQNVALTLTYNGPVFADVVNAQDDILLHLENGTLKDILQAGDIRPTVDMIRVLCTSFLTCPFVTQAARVITKRDPAQSFATHEYGKDVAQTVLVNGFGAFAVADRSREAAETMFYPVPFNKLYADPLVAATLHPLLANYVTRLPNQRNAVVFNVPSNLMAEYEEWHKSPVAAYAASCQATPGAISAMVSMHQKLSAPSFICQAKHRMHPGFAMTVVRTDEVLAEHILYCSRASTSMFVGLPSVVRREVRSDAVTFEITHEIASLHTALGYSSVIAPAHVAAITTDMGVHCQDLFMIFPGDAYQDRQLHDYIKMKAGVQTGSPGNRMDHVGYTAGVPRCENLPGLSHGQLATCEIIPTPVTSDVAYFQTPSNPRGRAACVVSCDAYSNESAERLLYDHSIPDPAYECRSTNNPWASQRGSLGDVLYNITFRQTALPGMYSPCRQFFHKEDIMRYNRGLYTLVNEYSARLAGAPATSTTDLQYVVVNGTDVFLDQPCHMLQEAYPTLAASHRVMLDEYMSNKQTHAPVHMGQYLIEEVAPMKRLLKLGNKVVY</sequence>
<comment type="function">
    <text evidence="1 2">Self-assembles to form an icosahedral capsid with a T=16 symmetry, about 200 nm in diameter, and consisting of 150 hexons and 12 pentons (total of 162 capsomers). Hexons form the edges and faces of the capsid and are each composed of six MCP molecules. In contrast, one penton is found at each of the 12 vertices. Eleven of the pentons are MCP pentamers, while the last vertex is occupied by the portal complex. The capsid is surrounded by a layer of proteinaceous material designated the tegument which, in turn, is enclosed in an envelope of host cell-derived lipids containing virus-encoded glycoproteins.</text>
</comment>
<comment type="subunit">
    <text evidence="1">Homomultimer. Makes the hexons and eleven out of twelve pentons. Interacts with triplex proteins 1/TRX1 and 2/TRX2; adjacent capsomers are linked together in groups of three by triplexes, heterotrimeric complexes composed of one molecule of TRX1 and two molecules of TRX2. Interacts with scaffold protein; this interaction allows efficient MCP transport to the host nucleus. Interacts with capsid vertex component 2/CVC2. Interacts with the small capsomere-interacting protein/SCP.</text>
</comment>
<comment type="subcellular location">
    <subcellularLocation>
        <location evidence="1">Virion</location>
    </subcellularLocation>
    <subcellularLocation>
        <location evidence="1">Host nucleus</location>
    </subcellularLocation>
</comment>
<comment type="similarity">
    <text evidence="1">Belongs to the herpesviridae major capsid protein family.</text>
</comment>
<dbReference type="EMBL" id="AF148805">
    <property type="protein sequence ID" value="ABD28876.1"/>
    <property type="molecule type" value="Genomic_DNA"/>
</dbReference>
<dbReference type="RefSeq" id="YP_001129378.1">
    <property type="nucleotide sequence ID" value="NC_009333.1"/>
</dbReference>
<dbReference type="PDB" id="6PPB">
    <property type="method" value="EM"/>
    <property type="resolution" value="4.30 A"/>
    <property type="chains" value="S/T/W/X=1-1376"/>
</dbReference>
<dbReference type="PDB" id="6PPD">
    <property type="method" value="EM"/>
    <property type="resolution" value="3.70 A"/>
    <property type="chains" value="4/S/T/W/X=1-1376"/>
</dbReference>
<dbReference type="PDB" id="6PPH">
    <property type="method" value="EM"/>
    <property type="resolution" value="3.80 A"/>
    <property type="chains" value="4/S/T/W/X=1-1376"/>
</dbReference>
<dbReference type="PDBsum" id="6PPB"/>
<dbReference type="PDBsum" id="6PPD"/>
<dbReference type="PDBsum" id="6PPH"/>
<dbReference type="EMDB" id="EMD-20432"/>
<dbReference type="SMR" id="Q2HRA7"/>
<dbReference type="BioGRID" id="1776955">
    <property type="interactions" value="1"/>
</dbReference>
<dbReference type="DNASU" id="4961452"/>
<dbReference type="GeneID" id="4961452"/>
<dbReference type="KEGG" id="vg:4961452"/>
<dbReference type="Proteomes" id="UP000000942">
    <property type="component" value="Segment"/>
</dbReference>
<dbReference type="GO" id="GO:0042025">
    <property type="term" value="C:host cell nucleus"/>
    <property type="evidence" value="ECO:0007669"/>
    <property type="project" value="UniProtKB-SubCell"/>
</dbReference>
<dbReference type="GO" id="GO:0039622">
    <property type="term" value="C:T=16 icosahedral viral capsid"/>
    <property type="evidence" value="ECO:0007669"/>
    <property type="project" value="UniProtKB-KW"/>
</dbReference>
<dbReference type="GO" id="GO:0005198">
    <property type="term" value="F:structural molecule activity"/>
    <property type="evidence" value="ECO:0007669"/>
    <property type="project" value="InterPro"/>
</dbReference>
<dbReference type="HAMAP" id="MF_04016">
    <property type="entry name" value="HSV_MCP"/>
    <property type="match status" value="1"/>
</dbReference>
<dbReference type="InterPro" id="IPR000912">
    <property type="entry name" value="Herpes_MCP"/>
</dbReference>
<dbReference type="InterPro" id="IPR023233">
    <property type="entry name" value="Herpes_MCP_upper_sf"/>
</dbReference>
<dbReference type="Pfam" id="PF03122">
    <property type="entry name" value="Herpes_MCP"/>
    <property type="match status" value="1"/>
</dbReference>
<dbReference type="PRINTS" id="PR00235">
    <property type="entry name" value="HSVCAPSIDMCP"/>
</dbReference>
<dbReference type="SUPFAM" id="SSF103417">
    <property type="entry name" value="Major capsid protein VP5"/>
    <property type="match status" value="1"/>
</dbReference>
<organism>
    <name type="scientific">Human herpesvirus 8 type P (isolate GK18)</name>
    <name type="common">HHV-8</name>
    <name type="synonym">Kaposi's sarcoma-associated herpesvirus</name>
    <dbReference type="NCBI Taxonomy" id="868565"/>
    <lineage>
        <taxon>Viruses</taxon>
        <taxon>Duplodnaviria</taxon>
        <taxon>Heunggongvirae</taxon>
        <taxon>Peploviricota</taxon>
        <taxon>Herviviricetes</taxon>
        <taxon>Herpesvirales</taxon>
        <taxon>Orthoherpesviridae</taxon>
        <taxon>Gammaherpesvirinae</taxon>
        <taxon>Rhadinovirus</taxon>
        <taxon>Rhadinovirus humangamma8</taxon>
        <taxon>Human herpesvirus 8</taxon>
    </lineage>
</organism>
<keyword id="KW-0002">3D-structure</keyword>
<keyword id="KW-0167">Capsid protein</keyword>
<keyword id="KW-1048">Host nucleus</keyword>
<keyword id="KW-1185">Reference proteome</keyword>
<keyword id="KW-1147">T=16 icosahedral capsid protein</keyword>
<keyword id="KW-0946">Virion</keyword>
<gene>
    <name evidence="1" type="primary">MCP</name>
    <name type="synonym">ORF25</name>
</gene>
<reference key="1">
    <citation type="journal article" date="1999" name="J. Virol.">
        <title>Identification of a spliced gene from Kaposi's sarcoma-associated herpesvirus encoding a protein with similarities to latent membrane proteins 1 and 2A of Epstein-Barr virus.</title>
        <authorList>
            <person name="Glenn M."/>
            <person name="Rainbow L."/>
            <person name="Aurade F."/>
            <person name="Davison A."/>
            <person name="Schulz T.F."/>
        </authorList>
    </citation>
    <scope>NUCLEOTIDE SEQUENCE [LARGE SCALE GENOMIC DNA]</scope>
</reference>
<reference key="2">
    <citation type="journal article" date="2006" name="J. Gen. Virol.">
        <title>Kaposi's sarcoma-associated herpesvirus immune modulation: an overview.</title>
        <authorList>
            <person name="Rezaee S.A.R."/>
            <person name="Cunningham C."/>
            <person name="Davison A.J."/>
            <person name="Blackbourn D.J."/>
        </authorList>
    </citation>
    <scope>NUCLEOTIDE SEQUENCE [LARGE SCALE GENOMIC DNA]</scope>
</reference>
<reference key="3">
    <citation type="journal article" date="2000" name="J. Virol.">
        <title>Three-dimensional structure of the human herpesvirus 8 capsid.</title>
        <authorList>
            <person name="Wu L."/>
            <person name="Lo P."/>
            <person name="Yu X."/>
            <person name="Stoops J.K."/>
            <person name="Forghani B."/>
            <person name="Zhou Z.H."/>
        </authorList>
    </citation>
    <scope>FUNCTION</scope>
</reference>
<protein>
    <recommendedName>
        <fullName evidence="1">Major capsid protein</fullName>
        <shortName evidence="1">MCP</shortName>
    </recommendedName>
</protein>
<organismHost>
    <name type="scientific">Homo sapiens</name>
    <name type="common">Human</name>
    <dbReference type="NCBI Taxonomy" id="9606"/>
</organismHost>